<keyword id="KW-0025">Alternative splicing</keyword>
<keyword id="KW-0256">Endoplasmic reticulum</keyword>
<keyword id="KW-0325">Glycoprotein</keyword>
<keyword id="KW-0378">Hydrolase</keyword>
<keyword id="KW-0472">Membrane</keyword>
<keyword id="KW-1267">Proteomics identification</keyword>
<keyword id="KW-1185">Reference proteome</keyword>
<keyword id="KW-0812">Transmembrane</keyword>
<keyword id="KW-1133">Transmembrane helix</keyword>
<proteinExistence type="evidence at protein level"/>
<accession>Q5EB52</accession>
<accession>B2R6S1</accession>
<accession>O14973</accession>
<accession>O15007</accession>
<accession>Q6AI49</accession>
<accession>Q92571</accession>
<gene>
    <name type="primary">MEST</name>
    <name type="synonym">PEG1</name>
</gene>
<reference key="1">
    <citation type="journal article" date="1996" name="Genomics">
        <title>Genomic imprinting and chromosomal localization of the human MEST gene.</title>
        <authorList>
            <person name="Nishita Y."/>
            <person name="Yoshida I."/>
            <person name="Sado T."/>
            <person name="Takagi N."/>
        </authorList>
    </citation>
    <scope>NUCLEOTIDE SEQUENCE [MRNA] (ISOFORM 1)</scope>
    <scope>TISSUE SPECIFICITY</scope>
    <scope>DEVELOPMENTAL STAGE</scope>
    <source>
        <tissue>Fetus</tissue>
    </source>
</reference>
<reference key="2">
    <citation type="journal article" date="1997" name="Genomics">
        <title>Monoallelic expression of human PEG1/MEST is paralleled by parent-specific methylation in fetuses.</title>
        <authorList>
            <person name="Riesewijk A.M."/>
            <person name="Hu L."/>
            <person name="Schulz U."/>
            <person name="Tariverdian G."/>
            <person name="Hoglund P."/>
            <person name="Kere J."/>
            <person name="Ropers H.-H."/>
            <person name="Kalscheuer V.M."/>
        </authorList>
    </citation>
    <scope>NUCLEOTIDE SEQUENCE [MRNA] (ISOFORM 1)</scope>
    <scope>TISSUE SPECIFICITY</scope>
    <scope>DEVELOPMENTAL STAGE</scope>
    <source>
        <tissue>Fetus</tissue>
    </source>
</reference>
<reference key="3">
    <citation type="journal article" date="1997" name="Hum. Mol. Genet.">
        <title>Human PEG1/MEST, an imprinted gene on chromosome 7.</title>
        <authorList>
            <person name="Kobayashi S."/>
            <person name="Kohda T."/>
            <person name="Miyoshi N."/>
            <person name="Kuroiwa Y."/>
            <person name="Aisaka K."/>
            <person name="Tsutsumi O."/>
            <person name="Kaneko-Ishino T."/>
            <person name="Ishino F."/>
        </authorList>
    </citation>
    <scope>NUCLEOTIDE SEQUENCE [MRNA] (ISOFORM 1)</scope>
    <scope>DEVELOPMENTAL STAGE</scope>
    <source>
        <tissue>Fetal kidney</tissue>
    </source>
</reference>
<reference key="4">
    <citation type="submission" date="2000-07" db="EMBL/GenBank/DDBJ databases">
        <title>Screening for the mutations of the PEG1/MEST gene in Silver Russell Syndrome.</title>
        <authorList>
            <person name="Kobayashi S."/>
            <person name="Uemura H."/>
            <person name="Kohda T."/>
            <person name="Niikawa N."/>
            <person name="Yamada M."/>
            <person name="Yamasaki R."/>
            <person name="Kaneko-Ishino T."/>
            <person name="Ishino F."/>
        </authorList>
    </citation>
    <scope>NUCLEOTIDE SEQUENCE [GENOMIC DNA]</scope>
    <source>
        <tissue>Placenta</tissue>
    </source>
</reference>
<reference key="5">
    <citation type="submission" date="2003-05" db="EMBL/GenBank/DDBJ databases">
        <title>Cloning of human full-length CDSs in BD Creator(TM) system donor vector.</title>
        <authorList>
            <person name="Kalnine N."/>
            <person name="Chen X."/>
            <person name="Rolfs A."/>
            <person name="Halleck A."/>
            <person name="Hines L."/>
            <person name="Eisenstein S."/>
            <person name="Koundinya M."/>
            <person name="Raphael J."/>
            <person name="Moreira D."/>
            <person name="Kelley T."/>
            <person name="LaBaer J."/>
            <person name="Lin Y."/>
            <person name="Phelan M."/>
            <person name="Farmer A."/>
        </authorList>
    </citation>
    <scope>NUCLEOTIDE SEQUENCE [LARGE SCALE MRNA] (ISOFORM 1)</scope>
</reference>
<reference key="6">
    <citation type="submission" date="2004-06" db="EMBL/GenBank/DDBJ databases">
        <title>Cloning of human full open reading frames in Gateway(TM) system entry vector (pDONR201).</title>
        <authorList>
            <person name="Ebert L."/>
            <person name="Schick M."/>
            <person name="Neubert P."/>
            <person name="Schatten R."/>
            <person name="Henze S."/>
            <person name="Korn B."/>
        </authorList>
    </citation>
    <scope>NUCLEOTIDE SEQUENCE [LARGE SCALE MRNA] (ISOFORM 1)</scope>
</reference>
<reference key="7">
    <citation type="journal article" date="2004" name="Nat. Genet.">
        <title>Complete sequencing and characterization of 21,243 full-length human cDNAs.</title>
        <authorList>
            <person name="Ota T."/>
            <person name="Suzuki Y."/>
            <person name="Nishikawa T."/>
            <person name="Otsuki T."/>
            <person name="Sugiyama T."/>
            <person name="Irie R."/>
            <person name="Wakamatsu A."/>
            <person name="Hayashi K."/>
            <person name="Sato H."/>
            <person name="Nagai K."/>
            <person name="Kimura K."/>
            <person name="Makita H."/>
            <person name="Sekine M."/>
            <person name="Obayashi M."/>
            <person name="Nishi T."/>
            <person name="Shibahara T."/>
            <person name="Tanaka T."/>
            <person name="Ishii S."/>
            <person name="Yamamoto J."/>
            <person name="Saito K."/>
            <person name="Kawai Y."/>
            <person name="Isono Y."/>
            <person name="Nakamura Y."/>
            <person name="Nagahari K."/>
            <person name="Murakami K."/>
            <person name="Yasuda T."/>
            <person name="Iwayanagi T."/>
            <person name="Wagatsuma M."/>
            <person name="Shiratori A."/>
            <person name="Sudo H."/>
            <person name="Hosoiri T."/>
            <person name="Kaku Y."/>
            <person name="Kodaira H."/>
            <person name="Kondo H."/>
            <person name="Sugawara M."/>
            <person name="Takahashi M."/>
            <person name="Kanda K."/>
            <person name="Yokoi T."/>
            <person name="Furuya T."/>
            <person name="Kikkawa E."/>
            <person name="Omura Y."/>
            <person name="Abe K."/>
            <person name="Kamihara K."/>
            <person name="Katsuta N."/>
            <person name="Sato K."/>
            <person name="Tanikawa M."/>
            <person name="Yamazaki M."/>
            <person name="Ninomiya K."/>
            <person name="Ishibashi T."/>
            <person name="Yamashita H."/>
            <person name="Murakawa K."/>
            <person name="Fujimori K."/>
            <person name="Tanai H."/>
            <person name="Kimata M."/>
            <person name="Watanabe M."/>
            <person name="Hiraoka S."/>
            <person name="Chiba Y."/>
            <person name="Ishida S."/>
            <person name="Ono Y."/>
            <person name="Takiguchi S."/>
            <person name="Watanabe S."/>
            <person name="Yosida M."/>
            <person name="Hotuta T."/>
            <person name="Kusano J."/>
            <person name="Kanehori K."/>
            <person name="Takahashi-Fujii A."/>
            <person name="Hara H."/>
            <person name="Tanase T.-O."/>
            <person name="Nomura Y."/>
            <person name="Togiya S."/>
            <person name="Komai F."/>
            <person name="Hara R."/>
            <person name="Takeuchi K."/>
            <person name="Arita M."/>
            <person name="Imose N."/>
            <person name="Musashino K."/>
            <person name="Yuuki H."/>
            <person name="Oshima A."/>
            <person name="Sasaki N."/>
            <person name="Aotsuka S."/>
            <person name="Yoshikawa Y."/>
            <person name="Matsunawa H."/>
            <person name="Ichihara T."/>
            <person name="Shiohata N."/>
            <person name="Sano S."/>
            <person name="Moriya S."/>
            <person name="Momiyama H."/>
            <person name="Satoh N."/>
            <person name="Takami S."/>
            <person name="Terashima Y."/>
            <person name="Suzuki O."/>
            <person name="Nakagawa S."/>
            <person name="Senoh A."/>
            <person name="Mizoguchi H."/>
            <person name="Goto Y."/>
            <person name="Shimizu F."/>
            <person name="Wakebe H."/>
            <person name="Hishigaki H."/>
            <person name="Watanabe T."/>
            <person name="Sugiyama A."/>
            <person name="Takemoto M."/>
            <person name="Kawakami B."/>
            <person name="Yamazaki M."/>
            <person name="Watanabe K."/>
            <person name="Kumagai A."/>
            <person name="Itakura S."/>
            <person name="Fukuzumi Y."/>
            <person name="Fujimori Y."/>
            <person name="Komiyama M."/>
            <person name="Tashiro H."/>
            <person name="Tanigami A."/>
            <person name="Fujiwara T."/>
            <person name="Ono T."/>
            <person name="Yamada K."/>
            <person name="Fujii Y."/>
            <person name="Ozaki K."/>
            <person name="Hirao M."/>
            <person name="Ohmori Y."/>
            <person name="Kawabata A."/>
            <person name="Hikiji T."/>
            <person name="Kobatake N."/>
            <person name="Inagaki H."/>
            <person name="Ikema Y."/>
            <person name="Okamoto S."/>
            <person name="Okitani R."/>
            <person name="Kawakami T."/>
            <person name="Noguchi S."/>
            <person name="Itoh T."/>
            <person name="Shigeta K."/>
            <person name="Senba T."/>
            <person name="Matsumura K."/>
            <person name="Nakajima Y."/>
            <person name="Mizuno T."/>
            <person name="Morinaga M."/>
            <person name="Sasaki M."/>
            <person name="Togashi T."/>
            <person name="Oyama M."/>
            <person name="Hata H."/>
            <person name="Watanabe M."/>
            <person name="Komatsu T."/>
            <person name="Mizushima-Sugano J."/>
            <person name="Satoh T."/>
            <person name="Shirai Y."/>
            <person name="Takahashi Y."/>
            <person name="Nakagawa K."/>
            <person name="Okumura K."/>
            <person name="Nagase T."/>
            <person name="Nomura N."/>
            <person name="Kikuchi H."/>
            <person name="Masuho Y."/>
            <person name="Yamashita R."/>
            <person name="Nakai K."/>
            <person name="Yada T."/>
            <person name="Nakamura Y."/>
            <person name="Ohara O."/>
            <person name="Isogai T."/>
            <person name="Sugano S."/>
        </authorList>
    </citation>
    <scope>NUCLEOTIDE SEQUENCE [LARGE SCALE MRNA] (ISOFORM 1)</scope>
</reference>
<reference key="8">
    <citation type="journal article" date="2007" name="BMC Genomics">
        <title>The full-ORF clone resource of the German cDNA consortium.</title>
        <authorList>
            <person name="Bechtel S."/>
            <person name="Rosenfelder H."/>
            <person name="Duda A."/>
            <person name="Schmidt C.P."/>
            <person name="Ernst U."/>
            <person name="Wellenreuther R."/>
            <person name="Mehrle A."/>
            <person name="Schuster C."/>
            <person name="Bahr A."/>
            <person name="Bloecker H."/>
            <person name="Heubner D."/>
            <person name="Hoerlein A."/>
            <person name="Michel G."/>
            <person name="Wedler H."/>
            <person name="Koehrer K."/>
            <person name="Ottenwaelder B."/>
            <person name="Poustka A."/>
            <person name="Wiemann S."/>
            <person name="Schupp I."/>
        </authorList>
    </citation>
    <scope>NUCLEOTIDE SEQUENCE [LARGE SCALE MRNA] (ISOFORM 2)</scope>
    <source>
        <tissue>Small intestine</tissue>
    </source>
</reference>
<reference key="9">
    <citation type="submission" date="2005-07" db="EMBL/GenBank/DDBJ databases">
        <authorList>
            <person name="Mural R.J."/>
            <person name="Istrail S."/>
            <person name="Sutton G.G."/>
            <person name="Florea L."/>
            <person name="Halpern A.L."/>
            <person name="Mobarry C.M."/>
            <person name="Lippert R."/>
            <person name="Walenz B."/>
            <person name="Shatkay H."/>
            <person name="Dew I."/>
            <person name="Miller J.R."/>
            <person name="Flanigan M.J."/>
            <person name="Edwards N.J."/>
            <person name="Bolanos R."/>
            <person name="Fasulo D."/>
            <person name="Halldorsson B.V."/>
            <person name="Hannenhalli S."/>
            <person name="Turner R."/>
            <person name="Yooseph S."/>
            <person name="Lu F."/>
            <person name="Nusskern D.R."/>
            <person name="Shue B.C."/>
            <person name="Zheng X.H."/>
            <person name="Zhong F."/>
            <person name="Delcher A.L."/>
            <person name="Huson D.H."/>
            <person name="Kravitz S.A."/>
            <person name="Mouchard L."/>
            <person name="Reinert K."/>
            <person name="Remington K.A."/>
            <person name="Clark A.G."/>
            <person name="Waterman M.S."/>
            <person name="Eichler E.E."/>
            <person name="Adams M.D."/>
            <person name="Hunkapiller M.W."/>
            <person name="Myers E.W."/>
            <person name="Venter J.C."/>
        </authorList>
    </citation>
    <scope>NUCLEOTIDE SEQUENCE [LARGE SCALE GENOMIC DNA]</scope>
</reference>
<reference key="10">
    <citation type="journal article" date="2004" name="Genome Res.">
        <title>The status, quality, and expansion of the NIH full-length cDNA project: the Mammalian Gene Collection (MGC).</title>
        <authorList>
            <consortium name="The MGC Project Team"/>
        </authorList>
    </citation>
    <scope>NUCLEOTIDE SEQUENCE [LARGE SCALE MRNA] (ISOFORMS 1 AND 3)</scope>
    <source>
        <tissue>Muscle</tissue>
        <tissue>Testis</tissue>
    </source>
</reference>
<reference key="11">
    <citation type="journal article" date="2000" name="Am. J. Hum. Genet.">
        <title>Isoform-specific imprinting of the human PEG1/MEST gene.</title>
        <authorList>
            <person name="Kosaki K."/>
            <person name="Kosaki R."/>
            <person name="Craigen W.J."/>
            <person name="Matsuo N."/>
        </authorList>
    </citation>
    <scope>TISSUE SPECIFICITY (ISOFORMS 1 AND 2)</scope>
</reference>
<comment type="interaction">
    <interactant intactId="EBI-1050204">
        <id>Q5EB52</id>
    </interactant>
    <interactant intactId="EBI-719613">
        <id>O95873</id>
        <label>C6orf47</label>
    </interactant>
    <organismsDiffer>false</organismsDiffer>
    <experiments>3</experiments>
</comment>
<comment type="interaction">
    <interactant intactId="EBI-1050204">
        <id>Q5EB52</id>
    </interactant>
    <interactant intactId="EBI-752069">
        <id>Q9H5X1</id>
        <label>CIAO2A</label>
    </interactant>
    <organismsDiffer>false</organismsDiffer>
    <experiments>3</experiments>
</comment>
<comment type="interaction">
    <interactant intactId="EBI-1050204">
        <id>Q5EB52</id>
    </interactant>
    <interactant intactId="EBI-7062247">
        <id>Q9UHD4</id>
        <label>CIDEB</label>
    </interactant>
    <organismsDiffer>false</organismsDiffer>
    <experiments>3</experiments>
</comment>
<comment type="interaction">
    <interactant intactId="EBI-1050204">
        <id>Q5EB52</id>
    </interactant>
    <interactant intactId="EBI-9304251">
        <id>Q05329</id>
        <label>GAD2</label>
    </interactant>
    <organismsDiffer>false</organismsDiffer>
    <experiments>3</experiments>
</comment>
<comment type="interaction">
    <interactant intactId="EBI-1050204">
        <id>Q5EB52</id>
    </interactant>
    <interactant intactId="EBI-2830566">
        <id>Q9H400</id>
        <label>LIME1</label>
    </interactant>
    <organismsDiffer>false</organismsDiffer>
    <experiments>3</experiments>
</comment>
<comment type="interaction">
    <interactant intactId="EBI-1050204">
        <id>Q5EB52</id>
    </interactant>
    <interactant intactId="EBI-2466594">
        <id>Q6ZMZ0</id>
        <label>RNF19B</label>
    </interactant>
    <organismsDiffer>false</organismsDiffer>
    <experiments>3</experiments>
</comment>
<comment type="subcellular location">
    <subcellularLocation>
        <location evidence="1">Endoplasmic reticulum membrane</location>
        <topology evidence="1">Multi-pass membrane protein</topology>
    </subcellularLocation>
</comment>
<comment type="alternative products">
    <event type="alternative splicing"/>
    <isoform>
        <id>Q5EB52-1</id>
        <name>1</name>
        <sequence type="displayed"/>
    </isoform>
    <isoform>
        <id>Q5EB52-2</id>
        <name>2</name>
        <name>Isoform b</name>
        <sequence type="described" ref="VSP_024532"/>
    </isoform>
    <isoform>
        <id>Q5EB52-3</id>
        <name>3</name>
        <sequence type="described" ref="VSP_024532 VSP_024533"/>
    </isoform>
</comment>
<comment type="tissue specificity">
    <text evidence="3 5">Highly expressed in hydatidiform moles, but barely expressed in dermoid cysts. Biallelic expression is detected in blood lymphocytes. Seems to imprinted in an isoform-specific manner rather than in a tissue-specific manner in lymphocytes. Isoform 1 is expressed only from the paternal allele. Isoform 2 is expressed from both the paternal allele and the maternal allele.</text>
</comment>
<comment type="developmental stage">
    <text evidence="3 4 5">Monoallelic expression of paternally derived allele was observed in all fetal tissues examined, including brain, skeletal muscle, kidney, adrenal, tongue, heart, skin and placenta. In 75-day fetus, expressed in the amnion, brain, heart, lung, stomach, gut, adrenal, kidney, muscle and liver.</text>
</comment>
<comment type="similarity">
    <text evidence="8">Belongs to the AB hydrolase superfamily.</text>
</comment>
<feature type="chain" id="PRO_0000284418" description="Mesoderm-specific transcript homolog protein">
    <location>
        <begin position="1"/>
        <end position="335"/>
    </location>
</feature>
<feature type="transmembrane region" description="Helical" evidence="2">
    <location>
        <begin position="13"/>
        <end position="33"/>
    </location>
</feature>
<feature type="transmembrane region" description="Helical" evidence="2">
    <location>
        <begin position="63"/>
        <end position="83"/>
    </location>
</feature>
<feature type="transmembrane region" description="Helical" evidence="2">
    <location>
        <begin position="266"/>
        <end position="286"/>
    </location>
</feature>
<feature type="domain" description="AB hydrolase-1" evidence="2">
    <location>
        <begin position="71"/>
        <end position="310"/>
    </location>
</feature>
<feature type="short sequence motif" description="RVIALD">
    <location>
        <begin position="98"/>
        <end position="103"/>
    </location>
</feature>
<feature type="glycosylation site" description="N-linked (GlcNAc...) asparagine" evidence="2">
    <location>
        <position position="163"/>
    </location>
</feature>
<feature type="splice variant" id="VSP_024532" description="In isoform 2 and isoform 3." evidence="6 7">
    <location>
        <begin position="1"/>
        <end position="9"/>
    </location>
</feature>
<feature type="splice variant" id="VSP_024533" description="In isoform 3." evidence="6">
    <location>
        <begin position="218"/>
        <end position="251"/>
    </location>
</feature>
<feature type="sequence conflict" description="In Ref. 1; BAA11432." evidence="8" ref="1">
    <original>E</original>
    <variation>K</variation>
    <location>
        <position position="90"/>
    </location>
</feature>
<feature type="sequence conflict" description="In Ref. 1; BAA11432." evidence="8" ref="1">
    <original>L</original>
    <variation>H</variation>
    <location>
        <position position="168"/>
    </location>
</feature>
<feature type="sequence conflict" description="In Ref. 3; BAA21757." evidence="8" ref="3">
    <original>G</original>
    <variation>W</variation>
    <location>
        <position position="222"/>
    </location>
</feature>
<protein>
    <recommendedName>
        <fullName>Mesoderm-specific transcript homolog protein</fullName>
        <ecNumber>3.-.-.-</ecNumber>
    </recommendedName>
    <alternativeName>
        <fullName>Paternally-expressed gene 1 protein</fullName>
    </alternativeName>
</protein>
<organism>
    <name type="scientific">Homo sapiens</name>
    <name type="common">Human</name>
    <dbReference type="NCBI Taxonomy" id="9606"/>
    <lineage>
        <taxon>Eukaryota</taxon>
        <taxon>Metazoa</taxon>
        <taxon>Chordata</taxon>
        <taxon>Craniata</taxon>
        <taxon>Vertebrata</taxon>
        <taxon>Euteleostomi</taxon>
        <taxon>Mammalia</taxon>
        <taxon>Eutheria</taxon>
        <taxon>Euarchontoglires</taxon>
        <taxon>Primates</taxon>
        <taxon>Haplorrhini</taxon>
        <taxon>Catarrhini</taxon>
        <taxon>Hominidae</taxon>
        <taxon>Homo</taxon>
    </lineage>
</organism>
<dbReference type="EC" id="3.-.-.-"/>
<dbReference type="EMBL" id="D78611">
    <property type="protein sequence ID" value="BAA11432.1"/>
    <property type="molecule type" value="mRNA"/>
</dbReference>
<dbReference type="EMBL" id="Y11534">
    <property type="protein sequence ID" value="CAA72297.1"/>
    <property type="molecule type" value="mRNA"/>
</dbReference>
<dbReference type="EMBL" id="D87367">
    <property type="protein sequence ID" value="BAA21757.1"/>
    <property type="molecule type" value="mRNA"/>
</dbReference>
<dbReference type="EMBL" id="AB045582">
    <property type="protein sequence ID" value="BAC02716.1"/>
    <property type="molecule type" value="Genomic_DNA"/>
</dbReference>
<dbReference type="EMBL" id="BT007056">
    <property type="protein sequence ID" value="AAP35705.1"/>
    <property type="molecule type" value="mRNA"/>
</dbReference>
<dbReference type="EMBL" id="CR457040">
    <property type="protein sequence ID" value="CAG33321.1"/>
    <property type="molecule type" value="mRNA"/>
</dbReference>
<dbReference type="EMBL" id="AK312688">
    <property type="protein sequence ID" value="BAG35568.1"/>
    <property type="molecule type" value="mRNA"/>
</dbReference>
<dbReference type="EMBL" id="CR627364">
    <property type="protein sequence ID" value="CAH10465.1"/>
    <property type="molecule type" value="mRNA"/>
</dbReference>
<dbReference type="EMBL" id="CH471070">
    <property type="protein sequence ID" value="EAW83766.1"/>
    <property type="molecule type" value="Genomic_DNA"/>
</dbReference>
<dbReference type="EMBL" id="BC002413">
    <property type="protein sequence ID" value="AAH02413.1"/>
    <property type="molecule type" value="mRNA"/>
</dbReference>
<dbReference type="EMBL" id="BC090049">
    <property type="protein sequence ID" value="AAH90049.1"/>
    <property type="molecule type" value="mRNA"/>
</dbReference>
<dbReference type="EMBL" id="BC011908">
    <property type="protein sequence ID" value="AAH11908.1"/>
    <property type="molecule type" value="mRNA"/>
</dbReference>
<dbReference type="EMBL" id="BC014564">
    <property type="protein sequence ID" value="AAH14564.1"/>
    <property type="molecule type" value="mRNA"/>
</dbReference>
<dbReference type="EMBL" id="BC018695">
    <property type="protein sequence ID" value="AAH18695.1"/>
    <property type="molecule type" value="mRNA"/>
</dbReference>
<dbReference type="CCDS" id="CCDS5822.1">
    <molecule id="Q5EB52-1"/>
</dbReference>
<dbReference type="CCDS" id="CCDS5823.1">
    <molecule id="Q5EB52-2"/>
</dbReference>
<dbReference type="CCDS" id="CCDS59081.1">
    <molecule id="Q5EB52-3"/>
</dbReference>
<dbReference type="RefSeq" id="NP_001240829.1">
    <property type="nucleotide sequence ID" value="NM_001253900.1"/>
</dbReference>
<dbReference type="RefSeq" id="NP_001240830.1">
    <molecule id="Q5EB52-3"/>
    <property type="nucleotide sequence ID" value="NM_001253901.1"/>
</dbReference>
<dbReference type="RefSeq" id="NP_001240831.1">
    <molecule id="Q5EB52-3"/>
    <property type="nucleotide sequence ID" value="NM_001253902.1"/>
</dbReference>
<dbReference type="RefSeq" id="NP_002393.2">
    <molecule id="Q5EB52-1"/>
    <property type="nucleotide sequence ID" value="NM_002402.3"/>
</dbReference>
<dbReference type="RefSeq" id="NP_803490.1">
    <molecule id="Q5EB52-2"/>
    <property type="nucleotide sequence ID" value="NM_177524.2"/>
</dbReference>
<dbReference type="RefSeq" id="NP_803491.1">
    <molecule id="Q5EB52-2"/>
    <property type="nucleotide sequence ID" value="NM_177525.2"/>
</dbReference>
<dbReference type="RefSeq" id="XP_016867707.1">
    <molecule id="Q5EB52-2"/>
    <property type="nucleotide sequence ID" value="XM_017012218.3"/>
</dbReference>
<dbReference type="RefSeq" id="XP_054214228.1">
    <molecule id="Q5EB52-2"/>
    <property type="nucleotide sequence ID" value="XM_054358253.1"/>
</dbReference>
<dbReference type="SMR" id="Q5EB52"/>
<dbReference type="BioGRID" id="110390">
    <property type="interactions" value="48"/>
</dbReference>
<dbReference type="FunCoup" id="Q5EB52">
    <property type="interactions" value="197"/>
</dbReference>
<dbReference type="IntAct" id="Q5EB52">
    <property type="interactions" value="25"/>
</dbReference>
<dbReference type="MINT" id="Q5EB52"/>
<dbReference type="STRING" id="9606.ENSP00000223215"/>
<dbReference type="ChEMBL" id="CHEMBL4523324"/>
<dbReference type="ESTHER" id="human-MEST">
    <property type="family name" value="MEST-like"/>
</dbReference>
<dbReference type="MEROPS" id="S33.972"/>
<dbReference type="GlyCosmos" id="Q5EB52">
    <property type="glycosylation" value="1 site, No reported glycans"/>
</dbReference>
<dbReference type="GlyGen" id="Q5EB52">
    <property type="glycosylation" value="2 sites, 1 O-linked glycan (1 site)"/>
</dbReference>
<dbReference type="iPTMnet" id="Q5EB52"/>
<dbReference type="PhosphoSitePlus" id="Q5EB52"/>
<dbReference type="SwissPalm" id="Q5EB52"/>
<dbReference type="BioMuta" id="MEST"/>
<dbReference type="DMDM" id="145566794"/>
<dbReference type="jPOST" id="Q5EB52"/>
<dbReference type="MassIVE" id="Q5EB52"/>
<dbReference type="PaxDb" id="9606-ENSP00000223215"/>
<dbReference type="PeptideAtlas" id="Q5EB52"/>
<dbReference type="ProteomicsDB" id="62757">
    <molecule id="Q5EB52-1"/>
</dbReference>
<dbReference type="ProteomicsDB" id="62758">
    <molecule id="Q5EB52-2"/>
</dbReference>
<dbReference type="ProteomicsDB" id="62759">
    <molecule id="Q5EB52-3"/>
</dbReference>
<dbReference type="Antibodypedia" id="946">
    <property type="antibodies" value="119 antibodies from 31 providers"/>
</dbReference>
<dbReference type="DNASU" id="4232"/>
<dbReference type="Ensembl" id="ENST00000223215.10">
    <molecule id="Q5EB52-1"/>
    <property type="protein sequence ID" value="ENSP00000223215.4"/>
    <property type="gene ID" value="ENSG00000106484.16"/>
</dbReference>
<dbReference type="Ensembl" id="ENST00000341441.9">
    <molecule id="Q5EB52-2"/>
    <property type="protein sequence ID" value="ENSP00000342749.4"/>
    <property type="gene ID" value="ENSG00000106484.16"/>
</dbReference>
<dbReference type="Ensembl" id="ENST00000378576.9">
    <molecule id="Q5EB52-3"/>
    <property type="protein sequence ID" value="ENSP00000367839.4"/>
    <property type="gene ID" value="ENSG00000106484.16"/>
</dbReference>
<dbReference type="Ensembl" id="ENST00000393187.5">
    <molecule id="Q5EB52-2"/>
    <property type="protein sequence ID" value="ENSP00000376884.1"/>
    <property type="gene ID" value="ENSG00000106484.16"/>
</dbReference>
<dbReference type="Ensembl" id="ENST00000416162.7">
    <molecule id="Q5EB52-3"/>
    <property type="protein sequence ID" value="ENSP00000408933.2"/>
    <property type="gene ID" value="ENSG00000106484.16"/>
</dbReference>
<dbReference type="Ensembl" id="ENST00000427521.6">
    <molecule id="Q5EB52-3"/>
    <property type="protein sequence ID" value="ENSP00000409505.2"/>
    <property type="gene ID" value="ENSG00000106484.16"/>
</dbReference>
<dbReference type="Ensembl" id="ENST00000462132.6">
    <molecule id="Q5EB52-2"/>
    <property type="protein sequence ID" value="ENSP00000495770.1"/>
    <property type="gene ID" value="ENSG00000106484.16"/>
</dbReference>
<dbReference type="GeneID" id="4232"/>
<dbReference type="KEGG" id="hsa:4232"/>
<dbReference type="MANE-Select" id="ENST00000223215.10">
    <property type="protein sequence ID" value="ENSP00000223215.4"/>
    <property type="RefSeq nucleotide sequence ID" value="NM_002402.4"/>
    <property type="RefSeq protein sequence ID" value="NP_002393.2"/>
</dbReference>
<dbReference type="UCSC" id="uc003vqc.4">
    <molecule id="Q5EB52-1"/>
    <property type="organism name" value="human"/>
</dbReference>
<dbReference type="AGR" id="HGNC:7028"/>
<dbReference type="CTD" id="4232"/>
<dbReference type="DisGeNET" id="4232"/>
<dbReference type="GeneCards" id="MEST"/>
<dbReference type="HGNC" id="HGNC:7028">
    <property type="gene designation" value="MEST"/>
</dbReference>
<dbReference type="HPA" id="ENSG00000106484">
    <property type="expression patterns" value="Tissue enriched (placenta)"/>
</dbReference>
<dbReference type="MalaCards" id="MEST"/>
<dbReference type="MIM" id="601029">
    <property type="type" value="gene"/>
</dbReference>
<dbReference type="neXtProt" id="NX_Q5EB52"/>
<dbReference type="OpenTargets" id="ENSG00000106484"/>
<dbReference type="PharmGKB" id="PA30762"/>
<dbReference type="VEuPathDB" id="HostDB:ENSG00000106484"/>
<dbReference type="eggNOG" id="KOG4178">
    <property type="taxonomic scope" value="Eukaryota"/>
</dbReference>
<dbReference type="GeneTree" id="ENSGT00510000047602"/>
<dbReference type="HOGENOM" id="CLU_020336_3_0_1"/>
<dbReference type="InParanoid" id="Q5EB52"/>
<dbReference type="OMA" id="CDMLGFG"/>
<dbReference type="OrthoDB" id="7130006at2759"/>
<dbReference type="PAN-GO" id="Q5EB52">
    <property type="GO annotations" value="1 GO annotation based on evolutionary models"/>
</dbReference>
<dbReference type="PhylomeDB" id="Q5EB52"/>
<dbReference type="TreeFam" id="TF329307"/>
<dbReference type="PathwayCommons" id="Q5EB52"/>
<dbReference type="SignaLink" id="Q5EB52"/>
<dbReference type="SIGNOR" id="Q5EB52"/>
<dbReference type="BioGRID-ORCS" id="4232">
    <property type="hits" value="18 hits in 1143 CRISPR screens"/>
</dbReference>
<dbReference type="ChiTaRS" id="MEST">
    <property type="organism name" value="human"/>
</dbReference>
<dbReference type="GeneWiki" id="MEST_(gene)"/>
<dbReference type="GenomeRNAi" id="4232"/>
<dbReference type="Pharos" id="Q5EB52">
    <property type="development level" value="Tbio"/>
</dbReference>
<dbReference type="PRO" id="PR:Q5EB52"/>
<dbReference type="Proteomes" id="UP000005640">
    <property type="component" value="Chromosome 7"/>
</dbReference>
<dbReference type="RNAct" id="Q5EB52">
    <property type="molecule type" value="protein"/>
</dbReference>
<dbReference type="Bgee" id="ENSG00000106484">
    <property type="expression patterns" value="Expressed in cartilage tissue and 213 other cell types or tissues"/>
</dbReference>
<dbReference type="ExpressionAtlas" id="Q5EB52">
    <property type="expression patterns" value="baseline and differential"/>
</dbReference>
<dbReference type="GO" id="GO:0005783">
    <property type="term" value="C:endoplasmic reticulum"/>
    <property type="evidence" value="ECO:0000250"/>
    <property type="project" value="UniProtKB"/>
</dbReference>
<dbReference type="GO" id="GO:0005789">
    <property type="term" value="C:endoplasmic reticulum membrane"/>
    <property type="evidence" value="ECO:0007669"/>
    <property type="project" value="UniProtKB-SubCell"/>
</dbReference>
<dbReference type="GO" id="GO:0070062">
    <property type="term" value="C:extracellular exosome"/>
    <property type="evidence" value="ECO:0007005"/>
    <property type="project" value="UniProtKB"/>
</dbReference>
<dbReference type="GO" id="GO:0016787">
    <property type="term" value="F:hydrolase activity"/>
    <property type="evidence" value="ECO:0007669"/>
    <property type="project" value="UniProtKB-KW"/>
</dbReference>
<dbReference type="GO" id="GO:0007498">
    <property type="term" value="P:mesoderm development"/>
    <property type="evidence" value="ECO:0000304"/>
    <property type="project" value="ProtInc"/>
</dbReference>
<dbReference type="GO" id="GO:0010883">
    <property type="term" value="P:regulation of lipid storage"/>
    <property type="evidence" value="ECO:0007669"/>
    <property type="project" value="Ensembl"/>
</dbReference>
<dbReference type="GO" id="GO:0032526">
    <property type="term" value="P:response to retinoic acid"/>
    <property type="evidence" value="ECO:0007669"/>
    <property type="project" value="Ensembl"/>
</dbReference>
<dbReference type="FunFam" id="3.40.50.1820:FF:000041">
    <property type="entry name" value="Mesoderm-specific transcript homolog protein"/>
    <property type="match status" value="1"/>
</dbReference>
<dbReference type="Gene3D" id="3.40.50.1820">
    <property type="entry name" value="alpha/beta hydrolase"/>
    <property type="match status" value="1"/>
</dbReference>
<dbReference type="InterPro" id="IPR000073">
    <property type="entry name" value="AB_hydrolase_1"/>
</dbReference>
<dbReference type="InterPro" id="IPR029058">
    <property type="entry name" value="AB_hydrolase_fold"/>
</dbReference>
<dbReference type="InterPro" id="IPR050266">
    <property type="entry name" value="AB_hydrolase_sf"/>
</dbReference>
<dbReference type="InterPro" id="IPR000639">
    <property type="entry name" value="Epox_hydrolase-like"/>
</dbReference>
<dbReference type="PANTHER" id="PTHR43798:SF33">
    <property type="entry name" value="HYDROLASE, PUTATIVE (AFU_ORTHOLOGUE AFUA_2G14860)-RELATED"/>
    <property type="match status" value="1"/>
</dbReference>
<dbReference type="PANTHER" id="PTHR43798">
    <property type="entry name" value="MONOACYLGLYCEROL LIPASE"/>
    <property type="match status" value="1"/>
</dbReference>
<dbReference type="Pfam" id="PF00561">
    <property type="entry name" value="Abhydrolase_1"/>
    <property type="match status" value="1"/>
</dbReference>
<dbReference type="PRINTS" id="PR00412">
    <property type="entry name" value="EPOXHYDRLASE"/>
</dbReference>
<dbReference type="SUPFAM" id="SSF53474">
    <property type="entry name" value="alpha/beta-Hydrolases"/>
    <property type="match status" value="1"/>
</dbReference>
<evidence type="ECO:0000250" key="1"/>
<evidence type="ECO:0000255" key="2"/>
<evidence type="ECO:0000269" key="3">
    <source>
    </source>
</evidence>
<evidence type="ECO:0000269" key="4">
    <source>
    </source>
</evidence>
<evidence type="ECO:0000269" key="5">
    <source>
    </source>
</evidence>
<evidence type="ECO:0000303" key="6">
    <source>
    </source>
</evidence>
<evidence type="ECO:0000303" key="7">
    <source>
    </source>
</evidence>
<evidence type="ECO:0000305" key="8"/>
<sequence length="335" mass="38830">MVRRDRLRRMREWWVQVGLLAVPLLAAYLHIPPPQLSPALHSWKSSGKFFTYKGLRIFYQDSVGVVGSPEIVVLLHGFPTSSYDWYKIWEGLTLRFHRVIALDFLGFGFSDKPRPHHYSIFEQASIVEALLRHLGLQNRRINLLSHDYGDIVAQELLYRYKQNRSGRLTIKSLCLSNGGIFPETHRPLLLQKLLKDGGVLSPILTRLMNFFVFSRGLTPVFGPYTRPSESELWDMWAGIRNNDGNLVIDSLLQYINQRKKFRRRWVGALASVTIPIHFIYGPLDPVNPYPEFLELYRKTLPRSTVSILDDHISHYPQLEDPMGFLNAYMGFINSF</sequence>
<name>MEST_HUMAN</name>